<reference evidence="4" key="1">
    <citation type="submission" date="2007-11" db="EMBL/GenBank/DDBJ databases">
        <title>Complete genome sequence of Clostridium phytofermentans ISDg.</title>
        <authorList>
            <person name="Leschine S.B."/>
            <person name="Warnick T.A."/>
            <person name="Blanchard J.L."/>
            <person name="Schnell D.J."/>
            <person name="Petit E.L."/>
            <person name="LaTouf W.G."/>
            <person name="Copeland A."/>
            <person name="Lucas S."/>
            <person name="Lapidus A."/>
            <person name="Barry K."/>
            <person name="Glavina del Rio T."/>
            <person name="Dalin E."/>
            <person name="Tice H."/>
            <person name="Pitluck S."/>
            <person name="Kiss H."/>
            <person name="Brettin T."/>
            <person name="Bruce D."/>
            <person name="Detter J.C."/>
            <person name="Han C."/>
            <person name="Kuske C."/>
            <person name="Schmutz J."/>
            <person name="Larimer F."/>
            <person name="Land M."/>
            <person name="Hauser L."/>
            <person name="Kyrpides N."/>
            <person name="Kim E.A."/>
            <person name="Richardson P."/>
        </authorList>
    </citation>
    <scope>NUCLEOTIDE SEQUENCE [LARGE SCALE GENOMIC DNA]</scope>
    <source>
        <strain>ATCC 700394 / DSM 18823 / ISDg</strain>
    </source>
</reference>
<reference evidence="3" key="2">
    <citation type="journal article" date="2009" name="J. Biol. Chem.">
        <title>Characterization of three beta-galactoside phosphorylases from Clostridium phytofermentans: discovery of d-galactosyl-beta1-&gt;4-l-rhamnose phosphorylase.</title>
        <authorList>
            <person name="Nakajima M."/>
            <person name="Nishimoto M."/>
            <person name="Kitaoka M."/>
        </authorList>
    </citation>
    <scope>FUNCTION</scope>
    <scope>CATALYTIC ACTIVITY</scope>
    <scope>BIOPHYSICOCHEMICAL PROPERTIES</scope>
</reference>
<sequence length="724" mass="83856">MSEKLTGRVTVPTDVDMIQETKEIAERWGADALRDCDGTDMPDELKKMPAKIYSTYYTTRKDNAWANANPDEVQQVYLMTEFYTAMSQGELRIPLMKHLYKDQLKPNTIHDIKRWWEVVDRTTGEPLVLDAWEYDENNQEVIILNPDHFHDYTVSFLAFIIWDPVHMYNFITNDWQDVEHQITYDVRQPKTQKYVIEKLKRWMKENPDSDVVRFTTFFHQFTLVFNEFAKEKFVDWFGYSASVSPYILEQFEKEVGYKFRPEYIIDQGYHNNTNRVPSKEFRDFQEFQQREVAKLMKVLVDICHDNDKEAMMFLGDHWIGTEPFGEYFKHVGLDAVVGSVGNGTTLRLISDIPGVKYTEGRFLPYFFPDVFHEGGDPIKEAKVNWVTARRAILRKPVDRIGYGGYLKLALDFPEFIQYIEEVCDEFRLLYDNMGGQSPYSHFKVGVLNSWGKIRSWGTHMVAHAIDYKQTYSYAGVLEALSGMPFDVEFISFEDVIKNPVILNECGVVINVGDAYTGPSGGAYWTNEKVSSAVKAFVAQGGGFIGVGEPSACEHQGRYFTLANVLGVNKEIGFSMSTDKYNWDEHSHFITEDSNESINFGEGMKNIYALDGAQILRKDGQDVQMAVNQFGDGRSVYISGIPYSFENSRMLYRAIFWAAGMEQEMKKWYSSNYNVEVNYYPATKKYCIVNNTYEPQETMIYDGLGREYSMKLKANDILWFTFLED</sequence>
<gene>
    <name type="ordered locus">Cphy_3030</name>
</gene>
<comment type="function">
    <text evidence="2">Reversibly phosphorolyzes beta-D-galactopyranosyl-(1-&gt;3)-N-acetyl-D-glucosamine to form alpha-D-galactopyranose 1-phosphate and acetyl-D-glucosamine. Active towards galacto-N-biose and lacto-N-biose. Does not phosphorolyze galacto-N-tetraose or lacto-N-tetraose. In the reverse reaction has activity toward N-acetyl-D-glucosamine and N-acetyl-D-galactosamine, but not L-rhamnose, D-glucose or D-galactose.</text>
</comment>
<comment type="catalytic activity">
    <reaction evidence="2">
        <text>beta-D-galactosyl-(1-&gt;3)-N-acetyl-D-glucosamine + phosphate = alpha-D-galactose 1-phosphate + N-acetyl-D-glucosamine</text>
        <dbReference type="Rhea" id="RHEA:20285"/>
        <dbReference type="ChEBI" id="CHEBI:27707"/>
        <dbReference type="ChEBI" id="CHEBI:43474"/>
        <dbReference type="ChEBI" id="CHEBI:58336"/>
        <dbReference type="ChEBI" id="CHEBI:506227"/>
        <dbReference type="EC" id="2.4.1.211"/>
    </reaction>
</comment>
<comment type="biophysicochemical properties">
    <kinetics>
        <KM evidence="2">2.8 mM for lacto-N-biose</KM>
        <KM evidence="2">10 mM for galacto-N-biose</KM>
        <KM evidence="2">1.9 mM for N-acetyl-D-glucosamine</KM>
        <KM evidence="2">3.3 mM for N-acetyl-D-galactosamine</KM>
    </kinetics>
</comment>
<comment type="similarity">
    <text evidence="3">Belongs to the glycoside hydrolase 112 family.</text>
</comment>
<dbReference type="EC" id="2.4.1.211"/>
<dbReference type="EMBL" id="CP000885">
    <property type="protein sequence ID" value="ABX43387.1"/>
    <property type="molecule type" value="Genomic_DNA"/>
</dbReference>
<dbReference type="RefSeq" id="WP_012201038.1">
    <property type="nucleotide sequence ID" value="NC_010001.1"/>
</dbReference>
<dbReference type="SMR" id="A9KQ75"/>
<dbReference type="STRING" id="357809.Cphy_3030"/>
<dbReference type="CAZy" id="GH112">
    <property type="family name" value="Glycoside Hydrolase Family 112"/>
</dbReference>
<dbReference type="KEGG" id="cpy:Cphy_3030"/>
<dbReference type="eggNOG" id="COG5426">
    <property type="taxonomic scope" value="Bacteria"/>
</dbReference>
<dbReference type="HOGENOM" id="CLU_022367_0_0_9"/>
<dbReference type="OrthoDB" id="5834503at2"/>
<dbReference type="BRENDA" id="2.4.1.211">
    <property type="organism ID" value="10424"/>
</dbReference>
<dbReference type="Proteomes" id="UP000000370">
    <property type="component" value="Chromosome"/>
</dbReference>
<dbReference type="GO" id="GO:0050500">
    <property type="term" value="F:1,3-beta-galactosyl-N-acetylhexosamine phosphorylase activity"/>
    <property type="evidence" value="ECO:0000314"/>
    <property type="project" value="UniProtKB"/>
</dbReference>
<dbReference type="GO" id="GO:0004645">
    <property type="term" value="F:1,4-alpha-oligoglucan phosphorylase activity"/>
    <property type="evidence" value="ECO:0007669"/>
    <property type="project" value="InterPro"/>
</dbReference>
<dbReference type="GO" id="GO:0005975">
    <property type="term" value="P:carbohydrate metabolic process"/>
    <property type="evidence" value="ECO:0000314"/>
    <property type="project" value="UniProtKB"/>
</dbReference>
<dbReference type="FunFam" id="3.40.50.880:FF:000159">
    <property type="entry name" value="1,3-beta-galactosyl-N-acetylhexosamine phosphorylase Cphy0577"/>
    <property type="match status" value="1"/>
</dbReference>
<dbReference type="Gene3D" id="3.40.50.880">
    <property type="match status" value="1"/>
</dbReference>
<dbReference type="Gene3D" id="3.20.20.80">
    <property type="entry name" value="Glycosidases"/>
    <property type="match status" value="1"/>
</dbReference>
<dbReference type="Gene3D" id="2.60.40.1180">
    <property type="entry name" value="Golgi alpha-mannosidase II"/>
    <property type="match status" value="1"/>
</dbReference>
<dbReference type="Gene3D" id="2.60.40.10">
    <property type="entry name" value="Immunoglobulins"/>
    <property type="match status" value="1"/>
</dbReference>
<dbReference type="InterPro" id="IPR029062">
    <property type="entry name" value="Class_I_gatase-like"/>
</dbReference>
<dbReference type="InterPro" id="IPR013780">
    <property type="entry name" value="Glyco_hydro_b"/>
</dbReference>
<dbReference type="InterPro" id="IPR013783">
    <property type="entry name" value="Ig-like_fold"/>
</dbReference>
<dbReference type="InterPro" id="IPR035080">
    <property type="entry name" value="Lact_bio_phlase-like_N"/>
</dbReference>
<dbReference type="InterPro" id="IPR012711">
    <property type="entry name" value="Lacto-N-biose_phosphorylase"/>
</dbReference>
<dbReference type="InterPro" id="IPR035356">
    <property type="entry name" value="LBP_C"/>
</dbReference>
<dbReference type="InterPro" id="IPR035363">
    <property type="entry name" value="LBP_M"/>
</dbReference>
<dbReference type="NCBIfam" id="TIGR02336">
    <property type="entry name" value="1,3-beta-galactosyl-N-acetylhexosamine phosphorylase"/>
    <property type="match status" value="1"/>
</dbReference>
<dbReference type="Pfam" id="PF09508">
    <property type="entry name" value="Lact_bio_phlase"/>
    <property type="match status" value="1"/>
</dbReference>
<dbReference type="Pfam" id="PF17386">
    <property type="entry name" value="LBP_C"/>
    <property type="match status" value="1"/>
</dbReference>
<dbReference type="Pfam" id="PF17385">
    <property type="entry name" value="LBP_M"/>
    <property type="match status" value="1"/>
</dbReference>
<dbReference type="SUPFAM" id="SSF52317">
    <property type="entry name" value="Class I glutamine amidotransferase-like"/>
    <property type="match status" value="1"/>
</dbReference>
<protein>
    <recommendedName>
        <fullName>1,3-beta-galactosyl-N-acetylhexosamine phosphorylase Cphy3030</fullName>
        <ecNumber>2.4.1.211</ecNumber>
    </recommendedName>
    <alternativeName>
        <fullName>D-galactosyl-1,4-L-rhamnose phosphorylase</fullName>
    </alternativeName>
</protein>
<proteinExistence type="evidence at protein level"/>
<keyword id="KW-0119">Carbohydrate metabolism</keyword>
<keyword id="KW-0328">Glycosyltransferase</keyword>
<keyword id="KW-1185">Reference proteome</keyword>
<keyword id="KW-0808">Transferase</keyword>
<feature type="chain" id="PRO_0000405290" description="1,3-beta-galactosyl-N-acetylhexosamine phosphorylase Cphy3030">
    <location>
        <begin position="1"/>
        <end position="724"/>
    </location>
</feature>
<feature type="active site" description="Proton donor" evidence="1">
    <location>
        <position position="316"/>
    </location>
</feature>
<accession>A9KQ75</accession>
<organism>
    <name type="scientific">Lachnoclostridium phytofermentans (strain ATCC 700394 / DSM 18823 / ISDg)</name>
    <name type="common">Clostridium phytofermentans</name>
    <dbReference type="NCBI Taxonomy" id="357809"/>
    <lineage>
        <taxon>Bacteria</taxon>
        <taxon>Bacillati</taxon>
        <taxon>Bacillota</taxon>
        <taxon>Clostridia</taxon>
        <taxon>Lachnospirales</taxon>
        <taxon>Lachnospiraceae</taxon>
    </lineage>
</organism>
<name>GAHP1_LACP7</name>
<evidence type="ECO:0000250" key="1"/>
<evidence type="ECO:0000269" key="2">
    <source>
    </source>
</evidence>
<evidence type="ECO:0000305" key="3"/>
<evidence type="ECO:0000312" key="4">
    <source>
        <dbReference type="EMBL" id="ABX43387.1"/>
    </source>
</evidence>